<dbReference type="EC" id="1.-.-.-" evidence="10"/>
<dbReference type="EMBL" id="AY553235">
    <property type="protein sequence ID" value="AAS92543.1"/>
    <property type="molecule type" value="Genomic_DNA"/>
</dbReference>
<dbReference type="SMR" id="Q6Q885"/>
<dbReference type="GlyCosmos" id="Q6Q885">
    <property type="glycosylation" value="3 sites, No reported glycans"/>
</dbReference>
<dbReference type="GO" id="GO:0016491">
    <property type="term" value="F:oxidoreductase activity"/>
    <property type="evidence" value="ECO:0007669"/>
    <property type="project" value="UniProtKB-KW"/>
</dbReference>
<dbReference type="CDD" id="cd08948">
    <property type="entry name" value="5beta-POR_like_SDR_a"/>
    <property type="match status" value="1"/>
</dbReference>
<dbReference type="Gene3D" id="3.40.50.720">
    <property type="entry name" value="NAD(P)-binding Rossmann-like Domain"/>
    <property type="match status" value="1"/>
</dbReference>
<dbReference type="InterPro" id="IPR036291">
    <property type="entry name" value="NAD(P)-bd_dom_sf"/>
</dbReference>
<dbReference type="InterPro" id="IPR055222">
    <property type="entry name" value="PRISE-like_Rossmann-fold"/>
</dbReference>
<dbReference type="PANTHER" id="PTHR32487">
    <property type="entry name" value="3-OXO-DELTA(4,5)-STEROID 5-BETA-REDUCTASE"/>
    <property type="match status" value="1"/>
</dbReference>
<dbReference type="PANTHER" id="PTHR32487:SF8">
    <property type="entry name" value="NAD-DEPENDENT EPIMERASE_DEHYDRATASE DOMAIN-CONTAINING PROTEIN"/>
    <property type="match status" value="1"/>
</dbReference>
<dbReference type="Pfam" id="PF22917">
    <property type="entry name" value="PRISE"/>
    <property type="match status" value="1"/>
</dbReference>
<dbReference type="SUPFAM" id="SSF51735">
    <property type="entry name" value="NAD(P)-binding Rossmann-fold domains"/>
    <property type="match status" value="1"/>
</dbReference>
<evidence type="ECO:0000250" key="1">
    <source>
        <dbReference type="UniProtKB" id="L0E2Z4"/>
    </source>
</evidence>
<evidence type="ECO:0000250" key="2">
    <source>
        <dbReference type="UniProtKB" id="O93868"/>
    </source>
</evidence>
<evidence type="ECO:0000255" key="3"/>
<evidence type="ECO:0000255" key="4">
    <source>
        <dbReference type="PROSITE-ProRule" id="PRU00498"/>
    </source>
</evidence>
<evidence type="ECO:0000269" key="5">
    <source>
    </source>
</evidence>
<evidence type="ECO:0000269" key="6">
    <source>
    </source>
</evidence>
<evidence type="ECO:0000269" key="7">
    <source>
    </source>
</evidence>
<evidence type="ECO:0000269" key="8">
    <source>
    </source>
</evidence>
<evidence type="ECO:0000303" key="9">
    <source>
    </source>
</evidence>
<evidence type="ECO:0000305" key="10"/>
<evidence type="ECO:0000305" key="11">
    <source>
    </source>
</evidence>
<evidence type="ECO:0000305" key="12">
    <source>
    </source>
</evidence>
<sequence length="404" mass="44948">MHSKPQRALVIGATGVSGWSLCLQLLQTQTPSAFESVDLLTNRPVSLSDAQWPTDSRLRVHSGIDLNRTSEEVIGSFRGIPDIGEITHVFYVACGMSPTYDFAETAKINVQMTKAALDAIEAVAVCTKHISFQAGSIVYGIPFADWLGDNFRPGPFNESFARVPPPFSDMVSHYRQEDYVKAMADKNSWTWSSIRPDTIIGFTPRNSPHCLSVSLGLYFAFYRYVYGKGAVLHFPGSESAWKADFTVIGQDQLARFHIFTSTHAASNGTPGALNISNGETTSWEQIWPKIVQYFDLVGAPPEPKMAEGDSDDASSPRFGPEWFQGVTAKATEFEAEYGLQPDFVTNIAWQYLTFLLNLKIDRVLDIEKARDLGFLESSNTVSDFEKSWDHMRKARIIPSVEQSD</sequence>
<keyword id="KW-0325">Glycoprotein</keyword>
<keyword id="KW-0521">NADP</keyword>
<keyword id="KW-0560">Oxidoreductase</keyword>
<keyword id="KW-0732">Signal</keyword>
<keyword id="KW-0843">Virulence</keyword>
<comment type="function">
    <text evidence="5 6 7 8 11 12">Short chain dehydrogenase; part of the gene cluster that mediates the biosynthesis of sirodesmin PL, an epipolythiodioxopiperazine (ETP) characterized by a disulfide bridged cyclic dipeptide and that acts as a phytotoxin which is involved in the blackleg didease of canola (PubMed:15387811, PubMed:18272357, PubMed:19762440). SirD catalyzes the O-prenylation of L-tyrosine (L-Tyr) in the presence of dimethylallyl diphosphate (DMAPP) to yield 4-O-dimethylallyl-L-Tyr, and therefore represents probably the first pathway-specific enzyme in the biosynthesis of sirodesmin PL (PubMed:19762440, PubMed:21038099, PubMed:24083562). 4-O-dimethylallyl-L-Tyr, then undergoes condensation with L-Ser in a reaction catalyzed by the non-ribosomal peptide synthase sirP to form the diketopiperazine (DKP) backbone (PubMed:18272357). Further bishydroxylation of the DKP performed by the cytochrome P450 monooxygenase sirC leads to the production of the intermediate phomamide (PubMed:27390873). This step is essential to form the reactive thiol group required for toxicity of sirodesmin PL (PubMed:27390873). The next steps of sirodesmin biosynthesis are not well understood yet, but some predictions could be made from intermediate compounds identification (PubMed:18272357). Phomamide is converted into phomalizarine via oxidation, probably by sirT (PubMed:18272357). Further oxidation, methylation (by sirM or sirN) and reduction steps convert phomalizarine to deacetyl sirodesmin (PubMed:18272357). Finally, acetyltransferase sirH probably acetylates deacetyl sirodesmin to produce sirodesmin PL (PubMed:18272357).</text>
</comment>
<comment type="pathway">
    <text evidence="11">Mycotoxin biosynthesis.</text>
</comment>
<comment type="similarity">
    <text evidence="10">Belongs to the short-chain dehydrogenases/reductases (SDR) family. Highly divergent.</text>
</comment>
<comment type="caution">
    <text evidence="10">It is uncertain whether sirR is an active short chain dehydrogenase since it lacks the conserved active sites.</text>
</comment>
<organism>
    <name type="scientific">Leptosphaeria maculans</name>
    <name type="common">Blackleg fungus</name>
    <name type="synonym">Phoma lingam</name>
    <dbReference type="NCBI Taxonomy" id="5022"/>
    <lineage>
        <taxon>Eukaryota</taxon>
        <taxon>Fungi</taxon>
        <taxon>Dikarya</taxon>
        <taxon>Ascomycota</taxon>
        <taxon>Pezizomycotina</taxon>
        <taxon>Dothideomycetes</taxon>
        <taxon>Pleosporomycetidae</taxon>
        <taxon>Pleosporales</taxon>
        <taxon>Pleosporineae</taxon>
        <taxon>Leptosphaeriaceae</taxon>
        <taxon>Plenodomus</taxon>
        <taxon>Plenodomus lingam/Leptosphaeria maculans species complex</taxon>
    </lineage>
</organism>
<feature type="signal peptide" evidence="3">
    <location>
        <begin position="1"/>
        <end position="28"/>
    </location>
</feature>
<feature type="chain" id="PRO_0000437716" description="Short chain dehydrogenase sirR">
    <location>
        <begin position="29"/>
        <end position="404"/>
    </location>
</feature>
<feature type="active site" description="Proton donor" evidence="2">
    <location>
        <position position="237"/>
    </location>
</feature>
<feature type="binding site" evidence="1">
    <location>
        <position position="56"/>
    </location>
    <ligand>
        <name>NADP(+)</name>
        <dbReference type="ChEBI" id="CHEBI:58349"/>
    </ligand>
</feature>
<feature type="binding site" evidence="1">
    <location>
        <position position="58"/>
    </location>
    <ligand>
        <name>NADP(+)</name>
        <dbReference type="ChEBI" id="CHEBI:58349"/>
    </ligand>
</feature>
<feature type="binding site" evidence="2">
    <location>
        <position position="291"/>
    </location>
    <ligand>
        <name>NADP(+)</name>
        <dbReference type="ChEBI" id="CHEBI:58349"/>
    </ligand>
</feature>
<feature type="glycosylation site" description="N-linked (GlcNAc...) asparagine" evidence="4">
    <location>
        <position position="67"/>
    </location>
</feature>
<feature type="glycosylation site" description="N-linked (GlcNAc...) asparagine" evidence="4">
    <location>
        <position position="157"/>
    </location>
</feature>
<feature type="glycosylation site" description="N-linked (GlcNAc...) asparagine" evidence="4">
    <location>
        <position position="274"/>
    </location>
</feature>
<gene>
    <name evidence="9" type="primary">sirR</name>
</gene>
<name>SIRR_LEPMC</name>
<protein>
    <recommendedName>
        <fullName evidence="10">Short chain dehydrogenase sirR</fullName>
        <ecNumber evidence="10">1.-.-.-</ecNumber>
    </recommendedName>
    <alternativeName>
        <fullName evidence="9">Sirodesmin biosynthesis protein R</fullName>
    </alternativeName>
</protein>
<accession>Q6Q885</accession>
<proteinExistence type="inferred from homology"/>
<reference key="1">
    <citation type="journal article" date="2004" name="Mol. Microbiol.">
        <title>The sirodesmin biosynthetic gene cluster of the plant pathogenic fungus Leptosphaeria maculans.</title>
        <authorList>
            <person name="Gardiner D.M."/>
            <person name="Cozijnsen A.J."/>
            <person name="Wilson L.M."/>
            <person name="Pedras M.S."/>
            <person name="Howlett B.J."/>
        </authorList>
    </citation>
    <scope>NUCLEOTIDE SEQUENCE [GENOMIC DNA]</scope>
    <scope>FUNCTION</scope>
</reference>
<reference key="2">
    <citation type="journal article" date="2008" name="Mycol. Res.">
        <title>Biosynthetic gene clusters for epipolythiodioxopiperazines in filamentous fungi.</title>
        <authorList>
            <person name="Fox E.M."/>
            <person name="Howlett B.J."/>
        </authorList>
    </citation>
    <scope>FUNCTION</scope>
</reference>
<reference key="3">
    <citation type="journal article" date="2010" name="Microbiology">
        <title>A tyrosine O-prenyltransferase catalyses the first pathway-specific step in the biosynthesis of sirodesmin PL.</title>
        <authorList>
            <person name="Kremer A."/>
            <person name="Li S.M."/>
        </authorList>
    </citation>
    <scope>FUNCTION</scope>
</reference>
<reference key="4">
    <citation type="journal article" date="2011" name="Appl. Microbiol. Biotechnol.">
        <title>The tyrosine O-prenyltransferase SirD catalyzes O-, N-, and C-prenylations.</title>
        <authorList>
            <person name="Zou H.X."/>
            <person name="Xie X."/>
            <person name="Zheng X.D."/>
            <person name="Li S.M."/>
        </authorList>
    </citation>
    <scope>FUNCTION</scope>
</reference>
<reference key="5">
    <citation type="journal article" date="2013" name="ACS Chem. Biol.">
        <title>Tyrosine O-prenyltransferase SirD catalyzes S-, C-, and N-prenylations on tyrosine and tryptophan derivatives.</title>
        <authorList>
            <person name="Rudolf J.D."/>
            <person name="Poulter C.D."/>
        </authorList>
    </citation>
    <scope>FUNCTION</scope>
</reference>
<reference key="6">
    <citation type="journal article" date="2016" name="PLoS ONE">
        <title>The epipolythiodiketopiperazine gene cluster in Claviceps purpurea: dysfunctional cytochrome P450 enzyme prevents formation of the previously unknown clapurines.</title>
        <authorList>
            <person name="Dopstadt J."/>
            <person name="Neubauer L."/>
            <person name="Tudzynski P."/>
            <person name="Humpf H.U."/>
        </authorList>
    </citation>
    <scope>FUNCTION</scope>
</reference>